<organism>
    <name type="scientific">Citrobacter koseri (strain ATCC BAA-895 / CDC 4225-83 / SGSC4696)</name>
    <dbReference type="NCBI Taxonomy" id="290338"/>
    <lineage>
        <taxon>Bacteria</taxon>
        <taxon>Pseudomonadati</taxon>
        <taxon>Pseudomonadota</taxon>
        <taxon>Gammaproteobacteria</taxon>
        <taxon>Enterobacterales</taxon>
        <taxon>Enterobacteriaceae</taxon>
        <taxon>Citrobacter</taxon>
    </lineage>
</organism>
<protein>
    <recommendedName>
        <fullName evidence="1">Deoxyuridine 5'-triphosphate nucleotidohydrolase</fullName>
        <shortName evidence="1">dUTPase</shortName>
        <ecNumber evidence="1">3.6.1.23</ecNumber>
    </recommendedName>
    <alternativeName>
        <fullName evidence="1">dUTP pyrophosphatase</fullName>
    </alternativeName>
</protein>
<comment type="function">
    <text evidence="1">This enzyme is involved in nucleotide metabolism: it produces dUMP, the immediate precursor of thymidine nucleotides and it decreases the intracellular concentration of dUTP so that uracil cannot be incorporated into DNA.</text>
</comment>
<comment type="catalytic activity">
    <reaction evidence="1">
        <text>dUTP + H2O = dUMP + diphosphate + H(+)</text>
        <dbReference type="Rhea" id="RHEA:10248"/>
        <dbReference type="ChEBI" id="CHEBI:15377"/>
        <dbReference type="ChEBI" id="CHEBI:15378"/>
        <dbReference type="ChEBI" id="CHEBI:33019"/>
        <dbReference type="ChEBI" id="CHEBI:61555"/>
        <dbReference type="ChEBI" id="CHEBI:246422"/>
        <dbReference type="EC" id="3.6.1.23"/>
    </reaction>
</comment>
<comment type="cofactor">
    <cofactor evidence="1">
        <name>Mg(2+)</name>
        <dbReference type="ChEBI" id="CHEBI:18420"/>
    </cofactor>
</comment>
<comment type="pathway">
    <text evidence="1">Pyrimidine metabolism; dUMP biosynthesis; dUMP from dCTP (dUTP route): step 2/2.</text>
</comment>
<comment type="similarity">
    <text evidence="1">Belongs to the dUTPase family.</text>
</comment>
<name>DUT_CITK8</name>
<keyword id="KW-0378">Hydrolase</keyword>
<keyword id="KW-0460">Magnesium</keyword>
<keyword id="KW-0479">Metal-binding</keyword>
<keyword id="KW-0546">Nucleotide metabolism</keyword>
<keyword id="KW-1185">Reference proteome</keyword>
<reference key="1">
    <citation type="submission" date="2007-08" db="EMBL/GenBank/DDBJ databases">
        <authorList>
            <consortium name="The Citrobacter koseri Genome Sequencing Project"/>
            <person name="McClelland M."/>
            <person name="Sanderson E.K."/>
            <person name="Porwollik S."/>
            <person name="Spieth J."/>
            <person name="Clifton W.S."/>
            <person name="Latreille P."/>
            <person name="Courtney L."/>
            <person name="Wang C."/>
            <person name="Pepin K."/>
            <person name="Bhonagiri V."/>
            <person name="Nash W."/>
            <person name="Johnson M."/>
            <person name="Thiruvilangam P."/>
            <person name="Wilson R."/>
        </authorList>
    </citation>
    <scope>NUCLEOTIDE SEQUENCE [LARGE SCALE GENOMIC DNA]</scope>
    <source>
        <strain>ATCC BAA-895 / CDC 4225-83 / SGSC4696</strain>
    </source>
</reference>
<accession>A8ARM7</accession>
<feature type="chain" id="PRO_1000057766" description="Deoxyuridine 5'-triphosphate nucleotidohydrolase">
    <location>
        <begin position="1"/>
        <end position="152"/>
    </location>
</feature>
<feature type="binding site" evidence="1">
    <location>
        <begin position="71"/>
        <end position="73"/>
    </location>
    <ligand>
        <name>substrate</name>
    </ligand>
</feature>
<feature type="binding site" evidence="1">
    <location>
        <position position="84"/>
    </location>
    <ligand>
        <name>substrate</name>
    </ligand>
</feature>
<feature type="binding site" evidence="1">
    <location>
        <begin position="88"/>
        <end position="90"/>
    </location>
    <ligand>
        <name>substrate</name>
    </ligand>
</feature>
<feature type="binding site" evidence="1">
    <location>
        <position position="98"/>
    </location>
    <ligand>
        <name>substrate</name>
    </ligand>
</feature>
<sequence length="152" mass="16226">MMKKIDVKILDPRVGQQFPLPTYATSGSAGLDLRACLDDAVELAPGATTLVPTGLAIHIADPSLAAVMLPRSGLGHKHGIVLGNLVGLIDSDYQGQLMVSIWNRGQDSFTIEPGERIAQMVFVPVVQAEFNLVEEFEATDRGEGGFGHSGRK</sequence>
<evidence type="ECO:0000255" key="1">
    <source>
        <dbReference type="HAMAP-Rule" id="MF_00116"/>
    </source>
</evidence>
<proteinExistence type="inferred from homology"/>
<dbReference type="EC" id="3.6.1.23" evidence="1"/>
<dbReference type="EMBL" id="CP000822">
    <property type="protein sequence ID" value="ABV16140.1"/>
    <property type="molecule type" value="Genomic_DNA"/>
</dbReference>
<dbReference type="RefSeq" id="WP_006687626.1">
    <property type="nucleotide sequence ID" value="NC_009792.1"/>
</dbReference>
<dbReference type="SMR" id="A8ARM7"/>
<dbReference type="STRING" id="290338.CKO_05097"/>
<dbReference type="GeneID" id="86998887"/>
<dbReference type="KEGG" id="cko:CKO_05097"/>
<dbReference type="HOGENOM" id="CLU_068508_1_1_6"/>
<dbReference type="UniPathway" id="UPA00610">
    <property type="reaction ID" value="UER00666"/>
</dbReference>
<dbReference type="Proteomes" id="UP000008148">
    <property type="component" value="Chromosome"/>
</dbReference>
<dbReference type="GO" id="GO:0004170">
    <property type="term" value="F:dUTP diphosphatase activity"/>
    <property type="evidence" value="ECO:0007669"/>
    <property type="project" value="UniProtKB-UniRule"/>
</dbReference>
<dbReference type="GO" id="GO:0000287">
    <property type="term" value="F:magnesium ion binding"/>
    <property type="evidence" value="ECO:0007669"/>
    <property type="project" value="UniProtKB-UniRule"/>
</dbReference>
<dbReference type="GO" id="GO:0006226">
    <property type="term" value="P:dUMP biosynthetic process"/>
    <property type="evidence" value="ECO:0007669"/>
    <property type="project" value="UniProtKB-UniRule"/>
</dbReference>
<dbReference type="GO" id="GO:0046081">
    <property type="term" value="P:dUTP catabolic process"/>
    <property type="evidence" value="ECO:0007669"/>
    <property type="project" value="InterPro"/>
</dbReference>
<dbReference type="CDD" id="cd07557">
    <property type="entry name" value="trimeric_dUTPase"/>
    <property type="match status" value="1"/>
</dbReference>
<dbReference type="FunFam" id="2.70.40.10:FF:000002">
    <property type="entry name" value="dUTP diphosphatase"/>
    <property type="match status" value="1"/>
</dbReference>
<dbReference type="Gene3D" id="2.70.40.10">
    <property type="match status" value="1"/>
</dbReference>
<dbReference type="HAMAP" id="MF_00116">
    <property type="entry name" value="dUTPase_bact"/>
    <property type="match status" value="1"/>
</dbReference>
<dbReference type="InterPro" id="IPR008181">
    <property type="entry name" value="dUTPase"/>
</dbReference>
<dbReference type="InterPro" id="IPR029054">
    <property type="entry name" value="dUTPase-like"/>
</dbReference>
<dbReference type="InterPro" id="IPR036157">
    <property type="entry name" value="dUTPase-like_sf"/>
</dbReference>
<dbReference type="InterPro" id="IPR033704">
    <property type="entry name" value="dUTPase_trimeric"/>
</dbReference>
<dbReference type="NCBIfam" id="TIGR00576">
    <property type="entry name" value="dut"/>
    <property type="match status" value="1"/>
</dbReference>
<dbReference type="NCBIfam" id="NF001862">
    <property type="entry name" value="PRK00601.1"/>
    <property type="match status" value="1"/>
</dbReference>
<dbReference type="PANTHER" id="PTHR11241">
    <property type="entry name" value="DEOXYURIDINE 5'-TRIPHOSPHATE NUCLEOTIDOHYDROLASE"/>
    <property type="match status" value="1"/>
</dbReference>
<dbReference type="PANTHER" id="PTHR11241:SF0">
    <property type="entry name" value="DEOXYURIDINE 5'-TRIPHOSPHATE NUCLEOTIDOHYDROLASE"/>
    <property type="match status" value="1"/>
</dbReference>
<dbReference type="Pfam" id="PF00692">
    <property type="entry name" value="dUTPase"/>
    <property type="match status" value="1"/>
</dbReference>
<dbReference type="SUPFAM" id="SSF51283">
    <property type="entry name" value="dUTPase-like"/>
    <property type="match status" value="1"/>
</dbReference>
<gene>
    <name evidence="1" type="primary">dut</name>
    <name type="ordered locus">CKO_05097</name>
</gene>